<reference key="1">
    <citation type="journal article" date="2010" name="PLoS ONE">
        <title>Genome sequence of Cronobacter sakazakii BAA-894 and comparative genomic hybridization analysis with other Cronobacter species.</title>
        <authorList>
            <person name="Kucerova E."/>
            <person name="Clifton S.W."/>
            <person name="Xia X.Q."/>
            <person name="Long F."/>
            <person name="Porwollik S."/>
            <person name="Fulton L."/>
            <person name="Fronick C."/>
            <person name="Minx P."/>
            <person name="Kyung K."/>
            <person name="Warren W."/>
            <person name="Fulton R."/>
            <person name="Feng D."/>
            <person name="Wollam A."/>
            <person name="Shah N."/>
            <person name="Bhonagiri V."/>
            <person name="Nash W.E."/>
            <person name="Hallsworth-Pepin K."/>
            <person name="Wilson R.K."/>
            <person name="McClelland M."/>
            <person name="Forsythe S.J."/>
        </authorList>
    </citation>
    <scope>NUCLEOTIDE SEQUENCE [LARGE SCALE GENOMIC DNA]</scope>
    <source>
        <strain>ATCC BAA-894</strain>
    </source>
</reference>
<sequence>MSTLLNPYFGEFGGMYVPQILMPALRQLEEAFVSAQSDAEFQAQFTDLLKNYAGRPTALTKCQNLTEGTRTTLYLKREDLLHGGAHKTNQVLGQALLAKRMGKTEIIAETGAGQHGVASALASALLGLKCRIYMGAKDVERQSPNVFRMKLMGAEVIPVYSGSATLKDACNEALRDWSGSYDRAHYMLGTAAGPHPFPTIVREFQRMIGEETRAQIMEKEGRLPDAVIACVGGGSNAIGMFADFINETSVGLIGVEPAGHGIETGEHGAPLKHGRVGIYFGMKAPMMQTDDGQIEESYSISAGLDFPSVGPQHAYLNSTGRAEYVSITDDEALEAFKTLCRQEGIIPALESSHALAHALKMMRAAPEKEQLLVVNLSGRGDKDIFTVHDIFKARGEM</sequence>
<comment type="function">
    <text evidence="1">The beta subunit is responsible for the synthesis of L-tryptophan from indole and L-serine.</text>
</comment>
<comment type="catalytic activity">
    <reaction evidence="1">
        <text>(1S,2R)-1-C-(indol-3-yl)glycerol 3-phosphate + L-serine = D-glyceraldehyde 3-phosphate + L-tryptophan + H2O</text>
        <dbReference type="Rhea" id="RHEA:10532"/>
        <dbReference type="ChEBI" id="CHEBI:15377"/>
        <dbReference type="ChEBI" id="CHEBI:33384"/>
        <dbReference type="ChEBI" id="CHEBI:57912"/>
        <dbReference type="ChEBI" id="CHEBI:58866"/>
        <dbReference type="ChEBI" id="CHEBI:59776"/>
        <dbReference type="EC" id="4.2.1.20"/>
    </reaction>
</comment>
<comment type="cofactor">
    <cofactor evidence="1">
        <name>pyridoxal 5'-phosphate</name>
        <dbReference type="ChEBI" id="CHEBI:597326"/>
    </cofactor>
</comment>
<comment type="pathway">
    <text evidence="1">Amino-acid biosynthesis; L-tryptophan biosynthesis; L-tryptophan from chorismate: step 5/5.</text>
</comment>
<comment type="subunit">
    <text evidence="1">Tetramer of two alpha and two beta chains.</text>
</comment>
<comment type="similarity">
    <text evidence="1">Belongs to the TrpB family.</text>
</comment>
<evidence type="ECO:0000255" key="1">
    <source>
        <dbReference type="HAMAP-Rule" id="MF_00133"/>
    </source>
</evidence>
<gene>
    <name evidence="1" type="primary">trpB</name>
    <name type="ordered locus">ESA_01559</name>
</gene>
<feature type="chain" id="PRO_1000018338" description="Tryptophan synthase beta chain">
    <location>
        <begin position="1"/>
        <end position="397"/>
    </location>
</feature>
<feature type="modified residue" description="N6-(pyridoxal phosphate)lysine" evidence="1">
    <location>
        <position position="87"/>
    </location>
</feature>
<name>TRPB_CROS8</name>
<proteinExistence type="inferred from homology"/>
<protein>
    <recommendedName>
        <fullName evidence="1">Tryptophan synthase beta chain</fullName>
        <ecNumber evidence="1">4.2.1.20</ecNumber>
    </recommendedName>
</protein>
<accession>A7MMG1</accession>
<keyword id="KW-0028">Amino-acid biosynthesis</keyword>
<keyword id="KW-0057">Aromatic amino acid biosynthesis</keyword>
<keyword id="KW-0456">Lyase</keyword>
<keyword id="KW-0663">Pyridoxal phosphate</keyword>
<keyword id="KW-1185">Reference proteome</keyword>
<keyword id="KW-0822">Tryptophan biosynthesis</keyword>
<organism>
    <name type="scientific">Cronobacter sakazakii (strain ATCC BAA-894)</name>
    <name type="common">Enterobacter sakazakii</name>
    <dbReference type="NCBI Taxonomy" id="290339"/>
    <lineage>
        <taxon>Bacteria</taxon>
        <taxon>Pseudomonadati</taxon>
        <taxon>Pseudomonadota</taxon>
        <taxon>Gammaproteobacteria</taxon>
        <taxon>Enterobacterales</taxon>
        <taxon>Enterobacteriaceae</taxon>
        <taxon>Cronobacter</taxon>
    </lineage>
</organism>
<dbReference type="EC" id="4.2.1.20" evidence="1"/>
<dbReference type="EMBL" id="CP000783">
    <property type="protein sequence ID" value="ABU76813.1"/>
    <property type="molecule type" value="Genomic_DNA"/>
</dbReference>
<dbReference type="RefSeq" id="WP_012124565.1">
    <property type="nucleotide sequence ID" value="NC_009778.1"/>
</dbReference>
<dbReference type="SMR" id="A7MMG1"/>
<dbReference type="KEGG" id="esa:ESA_01559"/>
<dbReference type="PATRIC" id="fig|290339.8.peg.1387"/>
<dbReference type="HOGENOM" id="CLU_016734_3_1_6"/>
<dbReference type="UniPathway" id="UPA00035">
    <property type="reaction ID" value="UER00044"/>
</dbReference>
<dbReference type="Proteomes" id="UP000000260">
    <property type="component" value="Chromosome"/>
</dbReference>
<dbReference type="GO" id="GO:0005737">
    <property type="term" value="C:cytoplasm"/>
    <property type="evidence" value="ECO:0007669"/>
    <property type="project" value="TreeGrafter"/>
</dbReference>
<dbReference type="GO" id="GO:0004834">
    <property type="term" value="F:tryptophan synthase activity"/>
    <property type="evidence" value="ECO:0007669"/>
    <property type="project" value="UniProtKB-UniRule"/>
</dbReference>
<dbReference type="CDD" id="cd06446">
    <property type="entry name" value="Trp-synth_B"/>
    <property type="match status" value="1"/>
</dbReference>
<dbReference type="FunFam" id="3.40.50.1100:FF:000001">
    <property type="entry name" value="Tryptophan synthase beta chain"/>
    <property type="match status" value="1"/>
</dbReference>
<dbReference type="FunFam" id="3.40.50.1100:FF:000004">
    <property type="entry name" value="Tryptophan synthase beta chain"/>
    <property type="match status" value="1"/>
</dbReference>
<dbReference type="Gene3D" id="3.40.50.1100">
    <property type="match status" value="2"/>
</dbReference>
<dbReference type="HAMAP" id="MF_00133">
    <property type="entry name" value="Trp_synth_beta"/>
    <property type="match status" value="1"/>
</dbReference>
<dbReference type="InterPro" id="IPR006653">
    <property type="entry name" value="Trp_synth_b_CS"/>
</dbReference>
<dbReference type="InterPro" id="IPR006654">
    <property type="entry name" value="Trp_synth_beta"/>
</dbReference>
<dbReference type="InterPro" id="IPR023026">
    <property type="entry name" value="Trp_synth_beta/beta-like"/>
</dbReference>
<dbReference type="InterPro" id="IPR001926">
    <property type="entry name" value="TrpB-like_PALP"/>
</dbReference>
<dbReference type="InterPro" id="IPR036052">
    <property type="entry name" value="TrpB-like_PALP_sf"/>
</dbReference>
<dbReference type="NCBIfam" id="TIGR00263">
    <property type="entry name" value="trpB"/>
    <property type="match status" value="1"/>
</dbReference>
<dbReference type="PANTHER" id="PTHR48077:SF3">
    <property type="entry name" value="TRYPTOPHAN SYNTHASE"/>
    <property type="match status" value="1"/>
</dbReference>
<dbReference type="PANTHER" id="PTHR48077">
    <property type="entry name" value="TRYPTOPHAN SYNTHASE-RELATED"/>
    <property type="match status" value="1"/>
</dbReference>
<dbReference type="Pfam" id="PF00291">
    <property type="entry name" value="PALP"/>
    <property type="match status" value="1"/>
</dbReference>
<dbReference type="PIRSF" id="PIRSF001413">
    <property type="entry name" value="Trp_syn_beta"/>
    <property type="match status" value="1"/>
</dbReference>
<dbReference type="SUPFAM" id="SSF53686">
    <property type="entry name" value="Tryptophan synthase beta subunit-like PLP-dependent enzymes"/>
    <property type="match status" value="1"/>
</dbReference>
<dbReference type="PROSITE" id="PS00168">
    <property type="entry name" value="TRP_SYNTHASE_BETA"/>
    <property type="match status" value="1"/>
</dbReference>